<evidence type="ECO:0000250" key="1"/>
<evidence type="ECO:0000250" key="2">
    <source>
        <dbReference type="UniProtKB" id="P60568"/>
    </source>
</evidence>
<evidence type="ECO:0000305" key="3"/>
<feature type="signal peptide" evidence="1">
    <location>
        <begin position="1"/>
        <end position="20"/>
    </location>
</feature>
<feature type="chain" id="PRO_0000015488" description="Interleukin-2">
    <location>
        <begin position="21"/>
        <end position="154"/>
    </location>
</feature>
<feature type="glycosylation site" description="O-linked (GalNAc...) threonine" evidence="1">
    <location>
        <position position="23"/>
    </location>
</feature>
<feature type="disulfide bond" evidence="1">
    <location>
        <begin position="78"/>
        <end position="126"/>
    </location>
</feature>
<keyword id="KW-1064">Adaptive immunity</keyword>
<keyword id="KW-0202">Cytokine</keyword>
<keyword id="KW-1015">Disulfide bond</keyword>
<keyword id="KW-0325">Glycoprotein</keyword>
<keyword id="KW-0339">Growth factor</keyword>
<keyword id="KW-0391">Immunity</keyword>
<keyword id="KW-1185">Reference proteome</keyword>
<keyword id="KW-0964">Secreted</keyword>
<keyword id="KW-0732">Signal</keyword>
<sequence length="154" mass="17685">MYRMQLLSCIALSLALVTNSAPTSSSTKKTQLQLEHLLLDLQMILNGINNYKNPKLTRMLTFKFYMPKKATELKHLQCLEEELKPLEEVLNLAQSKNFHLRDTKDLISNINVIVLELKGSETTLMCEYADETATIVEFLNRWITFCQSIISTLT</sequence>
<name>IL2_MACMU</name>
<comment type="function">
    <text evidence="2">Cytokine produced by activated CD4-positive helper T-cells and to a lesser extend activated CD8-positive T-cells and natural killer (NK) cells that plays pivotal roles in the immune response and tolerance. Binds to a receptor complex composed of either the high-affinity trimeric IL-2R (IL2RA/CD25, IL2RB/CD122 and IL2RG/CD132) or the low-affinity dimeric IL-2R (IL2RB and IL2RG). Interaction with the receptor leads to oligomerization and conformation changes in the IL-2R subunits resulting in downstream signaling starting with phosphorylation of JAK1 and JAK3. In turn, JAK1 and JAK3 phosphorylate the receptor to form a docking site leading to the phosphorylation of several substrates including STAT5. This process leads to activation of several pathways including STAT, phosphoinositide-3-kinase/PI3K and mitogen-activated protein kinase/MAPK pathways. Functions as a T-cell growth factor and can increase NK-cell cytolytic activity as well. Promotes strong proliferation of activated B-cells and subsequently immunoglobulin production. Plays a pivotal role in regulating the adaptive immune system by controlling the survival and proliferation of regulatory T-cells, which are required for the maintenance of immune tolerance. Moreover, participates in the differentiation and homeostasis of effector T-cell subsets, including Th1, Th2, Th17 as well as memory CD8-positive T-cells.</text>
</comment>
<comment type="subcellular location">
    <subcellularLocation>
        <location>Secreted</location>
    </subcellularLocation>
</comment>
<comment type="similarity">
    <text evidence="3">Belongs to the IL-2 family.</text>
</comment>
<protein>
    <recommendedName>
        <fullName>Interleukin-2</fullName>
        <shortName>IL-2</shortName>
    </recommendedName>
    <alternativeName>
        <fullName>T-cell growth factor</fullName>
        <shortName>TCGF</shortName>
    </alternativeName>
</protein>
<dbReference type="EMBL" id="U19847">
    <property type="protein sequence ID" value="AAB60400.1"/>
    <property type="molecule type" value="mRNA"/>
</dbReference>
<dbReference type="RefSeq" id="NP_001040595.1">
    <property type="nucleotide sequence ID" value="NM_001047130.1"/>
</dbReference>
<dbReference type="SMR" id="P68291"/>
<dbReference type="FunCoup" id="P68291">
    <property type="interactions" value="851"/>
</dbReference>
<dbReference type="STRING" id="9544.ENSMMUP00000027764"/>
<dbReference type="GlyCosmos" id="P68291">
    <property type="glycosylation" value="1 site, No reported glycans"/>
</dbReference>
<dbReference type="PaxDb" id="9544-ENSMMUP00000027764"/>
<dbReference type="Ensembl" id="ENSMMUT00000029666.4">
    <property type="protein sequence ID" value="ENSMMUP00000027764.2"/>
    <property type="gene ID" value="ENSMMUG00000021093.4"/>
</dbReference>
<dbReference type="GeneID" id="708017"/>
<dbReference type="KEGG" id="mcc:708017"/>
<dbReference type="CTD" id="3558"/>
<dbReference type="VEuPathDB" id="HostDB:ENSMMUG00000021093"/>
<dbReference type="VGNC" id="VGNC:100237">
    <property type="gene designation" value="IL2"/>
</dbReference>
<dbReference type="eggNOG" id="ENOG502RVR5">
    <property type="taxonomic scope" value="Eukaryota"/>
</dbReference>
<dbReference type="GeneTree" id="ENSGT00390000003555"/>
<dbReference type="HOGENOM" id="CLU_124210_0_0_1"/>
<dbReference type="InParanoid" id="P68291"/>
<dbReference type="OMA" id="NGVNNYE"/>
<dbReference type="OrthoDB" id="9450228at2759"/>
<dbReference type="TreeFam" id="TF338200"/>
<dbReference type="Proteomes" id="UP000006718">
    <property type="component" value="Chromosome 5"/>
</dbReference>
<dbReference type="Bgee" id="ENSMMUG00000021093">
    <property type="expression patterns" value="Expressed in spleen"/>
</dbReference>
<dbReference type="GO" id="GO:0005615">
    <property type="term" value="C:extracellular space"/>
    <property type="evidence" value="ECO:0000318"/>
    <property type="project" value="GO_Central"/>
</dbReference>
<dbReference type="GO" id="GO:0005125">
    <property type="term" value="F:cytokine activity"/>
    <property type="evidence" value="ECO:0000318"/>
    <property type="project" value="GO_Central"/>
</dbReference>
<dbReference type="GO" id="GO:0008083">
    <property type="term" value="F:growth factor activity"/>
    <property type="evidence" value="ECO:0007669"/>
    <property type="project" value="UniProtKB-KW"/>
</dbReference>
<dbReference type="GO" id="GO:0005134">
    <property type="term" value="F:interleukin-2 receptor binding"/>
    <property type="evidence" value="ECO:0000318"/>
    <property type="project" value="GO_Central"/>
</dbReference>
<dbReference type="GO" id="GO:0050798">
    <property type="term" value="P:activated T cell proliferation"/>
    <property type="evidence" value="ECO:0007669"/>
    <property type="project" value="Ensembl"/>
</dbReference>
<dbReference type="GO" id="GO:0002250">
    <property type="term" value="P:adaptive immune response"/>
    <property type="evidence" value="ECO:0007669"/>
    <property type="project" value="UniProtKB-KW"/>
</dbReference>
<dbReference type="GO" id="GO:0097696">
    <property type="term" value="P:cell surface receptor signaling pathway via STAT"/>
    <property type="evidence" value="ECO:0007669"/>
    <property type="project" value="Ensembl"/>
</dbReference>
<dbReference type="GO" id="GO:0097192">
    <property type="term" value="P:extrinsic apoptotic signaling pathway in absence of ligand"/>
    <property type="evidence" value="ECO:0007669"/>
    <property type="project" value="Ensembl"/>
</dbReference>
<dbReference type="GO" id="GO:0038110">
    <property type="term" value="P:interleukin-2-mediated signaling pathway"/>
    <property type="evidence" value="ECO:0000318"/>
    <property type="project" value="GO_Central"/>
</dbReference>
<dbReference type="GO" id="GO:0002366">
    <property type="term" value="P:leukocyte activation involved in immune response"/>
    <property type="evidence" value="ECO:0007669"/>
    <property type="project" value="Ensembl"/>
</dbReference>
<dbReference type="GO" id="GO:0002903">
    <property type="term" value="P:negative regulation of B cell apoptotic process"/>
    <property type="evidence" value="ECO:0007669"/>
    <property type="project" value="Ensembl"/>
</dbReference>
<dbReference type="GO" id="GO:0050728">
    <property type="term" value="P:negative regulation of inflammatory response"/>
    <property type="evidence" value="ECO:0007669"/>
    <property type="project" value="Ensembl"/>
</dbReference>
<dbReference type="GO" id="GO:0050672">
    <property type="term" value="P:negative regulation of lymphocyte proliferation"/>
    <property type="evidence" value="ECO:0007669"/>
    <property type="project" value="Ensembl"/>
</dbReference>
<dbReference type="GO" id="GO:2000320">
    <property type="term" value="P:negative regulation of T-helper 17 cell differentiation"/>
    <property type="evidence" value="ECO:0007669"/>
    <property type="project" value="Ensembl"/>
</dbReference>
<dbReference type="GO" id="GO:0042104">
    <property type="term" value="P:positive regulation of activated T cell proliferation"/>
    <property type="evidence" value="ECO:0007669"/>
    <property type="project" value="Ensembl"/>
</dbReference>
<dbReference type="GO" id="GO:0030890">
    <property type="term" value="P:positive regulation of B cell proliferation"/>
    <property type="evidence" value="ECO:0007669"/>
    <property type="project" value="Ensembl"/>
</dbReference>
<dbReference type="GO" id="GO:0032740">
    <property type="term" value="P:positive regulation of interleukin-17 production"/>
    <property type="evidence" value="ECO:0007669"/>
    <property type="project" value="Ensembl"/>
</dbReference>
<dbReference type="GO" id="GO:0048304">
    <property type="term" value="P:positive regulation of isotype switching to IgG isotypes"/>
    <property type="evidence" value="ECO:0007669"/>
    <property type="project" value="Ensembl"/>
</dbReference>
<dbReference type="GO" id="GO:1900100">
    <property type="term" value="P:positive regulation of plasma cell differentiation"/>
    <property type="evidence" value="ECO:0007669"/>
    <property type="project" value="Ensembl"/>
</dbReference>
<dbReference type="GO" id="GO:0045944">
    <property type="term" value="P:positive regulation of transcription by RNA polymerase II"/>
    <property type="evidence" value="ECO:0007669"/>
    <property type="project" value="Ensembl"/>
</dbReference>
<dbReference type="GO" id="GO:0032729">
    <property type="term" value="P:positive regulation of type II interferon production"/>
    <property type="evidence" value="ECO:0007669"/>
    <property type="project" value="Ensembl"/>
</dbReference>
<dbReference type="GO" id="GO:2000561">
    <property type="term" value="P:regulation of CD4-positive, alpha-beta T cell proliferation"/>
    <property type="evidence" value="ECO:0007669"/>
    <property type="project" value="Ensembl"/>
</dbReference>
<dbReference type="GO" id="GO:0046013">
    <property type="term" value="P:regulation of T cell homeostatic proliferation"/>
    <property type="evidence" value="ECO:0007669"/>
    <property type="project" value="Ensembl"/>
</dbReference>
<dbReference type="GO" id="GO:0006366">
    <property type="term" value="P:transcription by RNA polymerase II"/>
    <property type="evidence" value="ECO:0007669"/>
    <property type="project" value="Ensembl"/>
</dbReference>
<dbReference type="FunFam" id="1.20.1250.10:FF:000025">
    <property type="entry name" value="Interleukin-2"/>
    <property type="match status" value="1"/>
</dbReference>
<dbReference type="Gene3D" id="1.20.1250.10">
    <property type="match status" value="1"/>
</dbReference>
<dbReference type="InterPro" id="IPR009079">
    <property type="entry name" value="4_helix_cytokine-like_core"/>
</dbReference>
<dbReference type="InterPro" id="IPR000779">
    <property type="entry name" value="IL-2"/>
</dbReference>
<dbReference type="InterPro" id="IPR030477">
    <property type="entry name" value="IL-2_CS"/>
</dbReference>
<dbReference type="PANTHER" id="PTHR48487">
    <property type="entry name" value="INTERLEUKIN-2"/>
    <property type="match status" value="1"/>
</dbReference>
<dbReference type="PANTHER" id="PTHR48487:SF1">
    <property type="entry name" value="INTERLEUKIN-2"/>
    <property type="match status" value="1"/>
</dbReference>
<dbReference type="Pfam" id="PF00715">
    <property type="entry name" value="IL2"/>
    <property type="match status" value="1"/>
</dbReference>
<dbReference type="PRINTS" id="PR00265">
    <property type="entry name" value="INTERLEUKIN2"/>
</dbReference>
<dbReference type="SMART" id="SM00189">
    <property type="entry name" value="IL2"/>
    <property type="match status" value="1"/>
</dbReference>
<dbReference type="SUPFAM" id="SSF47266">
    <property type="entry name" value="4-helical cytokines"/>
    <property type="match status" value="1"/>
</dbReference>
<dbReference type="PROSITE" id="PS00424">
    <property type="entry name" value="INTERLEUKIN_2"/>
    <property type="match status" value="1"/>
</dbReference>
<organism>
    <name type="scientific">Macaca mulatta</name>
    <name type="common">Rhesus macaque</name>
    <dbReference type="NCBI Taxonomy" id="9544"/>
    <lineage>
        <taxon>Eukaryota</taxon>
        <taxon>Metazoa</taxon>
        <taxon>Chordata</taxon>
        <taxon>Craniata</taxon>
        <taxon>Vertebrata</taxon>
        <taxon>Euteleostomi</taxon>
        <taxon>Mammalia</taxon>
        <taxon>Eutheria</taxon>
        <taxon>Euarchontoglires</taxon>
        <taxon>Primates</taxon>
        <taxon>Haplorrhini</taxon>
        <taxon>Catarrhini</taxon>
        <taxon>Cercopithecidae</taxon>
        <taxon>Cercopithecinae</taxon>
        <taxon>Macaca</taxon>
    </lineage>
</organism>
<accession>P68291</accession>
<accession>P51498</accession>
<reference key="1">
    <citation type="journal article" date="1995" name="J. Immunol.">
        <title>Comparative sequence analysis of cytokine genes from human and nonhuman primates.</title>
        <authorList>
            <person name="Villinger F.J."/>
            <person name="Brar S.S."/>
            <person name="Mayne A.E."/>
            <person name="Chikkala N."/>
            <person name="Ansari A.A."/>
        </authorList>
    </citation>
    <scope>NUCLEOTIDE SEQUENCE [MRNA]</scope>
    <source>
        <tissue>Blood</tissue>
    </source>
</reference>
<proteinExistence type="evidence at transcript level"/>
<gene>
    <name type="primary">IL2</name>
</gene>